<protein>
    <recommendedName>
        <fullName>Protein transport protein SEC13</fullName>
    </recommendedName>
</protein>
<accession>Q6BZX5</accession>
<dbReference type="EMBL" id="CR382132">
    <property type="protein sequence ID" value="CAG78850.1"/>
    <property type="molecule type" value="Genomic_DNA"/>
</dbReference>
<dbReference type="RefSeq" id="XP_506037.1">
    <property type="nucleotide sequence ID" value="XM_506037.1"/>
</dbReference>
<dbReference type="SMR" id="Q6BZX5"/>
<dbReference type="FunCoup" id="Q6BZX5">
    <property type="interactions" value="1106"/>
</dbReference>
<dbReference type="STRING" id="284591.Q6BZX5"/>
<dbReference type="EnsemblFungi" id="CAG78850">
    <property type="protein sequence ID" value="CAG78850"/>
    <property type="gene ID" value="YALI0_F30151g"/>
</dbReference>
<dbReference type="KEGG" id="yli:2908597"/>
<dbReference type="VEuPathDB" id="FungiDB:YALI0_F30151g"/>
<dbReference type="HOGENOM" id="CLU_032441_0_1_1"/>
<dbReference type="InParanoid" id="Q6BZX5"/>
<dbReference type="OMA" id="IWKEEGD"/>
<dbReference type="OrthoDB" id="110074at4891"/>
<dbReference type="Proteomes" id="UP000001300">
    <property type="component" value="Chromosome F"/>
</dbReference>
<dbReference type="GO" id="GO:0030127">
    <property type="term" value="C:COPII vesicle coat"/>
    <property type="evidence" value="ECO:0000318"/>
    <property type="project" value="GO_Central"/>
</dbReference>
<dbReference type="GO" id="GO:0005789">
    <property type="term" value="C:endoplasmic reticulum membrane"/>
    <property type="evidence" value="ECO:0007669"/>
    <property type="project" value="UniProtKB-SubCell"/>
</dbReference>
<dbReference type="GO" id="GO:0061700">
    <property type="term" value="C:GATOR2 complex"/>
    <property type="evidence" value="ECO:0007669"/>
    <property type="project" value="EnsemblFungi"/>
</dbReference>
<dbReference type="GO" id="GO:0031080">
    <property type="term" value="C:nuclear pore outer ring"/>
    <property type="evidence" value="ECO:0000318"/>
    <property type="project" value="GO_Central"/>
</dbReference>
<dbReference type="GO" id="GO:0005198">
    <property type="term" value="F:structural molecule activity"/>
    <property type="evidence" value="ECO:0000318"/>
    <property type="project" value="GO_Central"/>
</dbReference>
<dbReference type="GO" id="GO:0090114">
    <property type="term" value="P:COPII-coated vesicle budding"/>
    <property type="evidence" value="ECO:0000318"/>
    <property type="project" value="GO_Central"/>
</dbReference>
<dbReference type="GO" id="GO:0051028">
    <property type="term" value="P:mRNA transport"/>
    <property type="evidence" value="ECO:0007669"/>
    <property type="project" value="UniProtKB-KW"/>
</dbReference>
<dbReference type="GO" id="GO:0032008">
    <property type="term" value="P:positive regulation of TOR signaling"/>
    <property type="evidence" value="ECO:0000318"/>
    <property type="project" value="GO_Central"/>
</dbReference>
<dbReference type="GO" id="GO:0032527">
    <property type="term" value="P:protein exit from endoplasmic reticulum"/>
    <property type="evidence" value="ECO:0000318"/>
    <property type="project" value="GO_Central"/>
</dbReference>
<dbReference type="GO" id="GO:0006606">
    <property type="term" value="P:protein import into nucleus"/>
    <property type="evidence" value="ECO:0000318"/>
    <property type="project" value="GO_Central"/>
</dbReference>
<dbReference type="FunFam" id="2.130.10.10:FF:000017">
    <property type="entry name" value="SEC13 homolog (S. cerevisiae)"/>
    <property type="match status" value="1"/>
</dbReference>
<dbReference type="Gene3D" id="2.130.10.10">
    <property type="entry name" value="YVTN repeat-like/Quinoprotein amine dehydrogenase"/>
    <property type="match status" value="1"/>
</dbReference>
<dbReference type="InterPro" id="IPR037363">
    <property type="entry name" value="Sec13/Seh1_fam"/>
</dbReference>
<dbReference type="InterPro" id="IPR015943">
    <property type="entry name" value="WD40/YVTN_repeat-like_dom_sf"/>
</dbReference>
<dbReference type="InterPro" id="IPR036322">
    <property type="entry name" value="WD40_repeat_dom_sf"/>
</dbReference>
<dbReference type="InterPro" id="IPR001680">
    <property type="entry name" value="WD40_rpt"/>
</dbReference>
<dbReference type="PANTHER" id="PTHR11024">
    <property type="entry name" value="NUCLEAR PORE COMPLEX PROTEIN SEC13 / SEH1 FAMILY MEMBER"/>
    <property type="match status" value="1"/>
</dbReference>
<dbReference type="PANTHER" id="PTHR11024:SF2">
    <property type="entry name" value="PROTEIN SEC13 HOMOLOG"/>
    <property type="match status" value="1"/>
</dbReference>
<dbReference type="Pfam" id="PF00400">
    <property type="entry name" value="WD40"/>
    <property type="match status" value="4"/>
</dbReference>
<dbReference type="SMART" id="SM00320">
    <property type="entry name" value="WD40"/>
    <property type="match status" value="6"/>
</dbReference>
<dbReference type="SUPFAM" id="SSF50978">
    <property type="entry name" value="WD40 repeat-like"/>
    <property type="match status" value="1"/>
</dbReference>
<dbReference type="PROSITE" id="PS50082">
    <property type="entry name" value="WD_REPEATS_2"/>
    <property type="match status" value="2"/>
</dbReference>
<dbReference type="PROSITE" id="PS50294">
    <property type="entry name" value="WD_REPEATS_REGION"/>
    <property type="match status" value="1"/>
</dbReference>
<proteinExistence type="inferred from homology"/>
<sequence length="298" mass="32740">MVTIGNTHDDLIHDAVLDYYGKRLATCSSDKTIKIFEIDGDNHKLVETLRGHEGPVWQVSWAHPKFGSIIASASYDGKVFIWREENGRWTNIAQHQHNASVNSVVWAPQEYGPLLLCASSDGNVSVVEFKEGGNCEATTFAAHDVGANSASWAPPAVSGSLIQPINGKASNNIRIVTGGCDNLVKIWKYDPSSKTYVIEETLSGHKDWVRDVAWSSSVLSKSYIASASQDKTVIVWTQEGNQPWKKKLLQDIPFPDVVWKVSWSLSGNVLAVSGGDNKVTLWKENLTGEWESAGVVEE</sequence>
<comment type="function">
    <text evidence="2">Component of the coat protein complex II (COPII) which promotes the formation of transport vesicles from the endoplasmic reticulum (ER). The coat has two main functions, the physical deformation of the endoplasmic reticulum membrane into vesicles and the selection of cargo molecules. It also functions as a component of the nuclear pore complex (NPC). NPC components, collectively referred to as nucleoporins (NUPs), can play the role of both NPC structural components and of docking or interaction partners for transiently associated nuclear transport factors. SEC13 is required for efficient mRNA export from the nucleus to the cytoplasm and for correct nuclear pore biogenesis and distribution (By similarity).</text>
</comment>
<comment type="subunit">
    <text evidence="2">The COPII coat is composed of at least 5 proteins: the SEC23/24 complex, the SEC13/31 complex, and the protein SAR1. Component of the nuclear pore complex (NPC). NPC constitutes the exclusive means of nucleocytoplasmic transport. NPCs allow the passive diffusion of ions and small molecules and the active, nuclear transport receptor-mediated bidirectional transport of macromolecules such as proteins, RNAs, ribonucleoparticles (RNPs), and ribosomal subunits across the nuclear envelope. Due to its 8-fold rotational symmetry, all subunits are present with 8 copies or multiples thereof.</text>
</comment>
<comment type="subcellular location">
    <subcellularLocation>
        <location evidence="1">Cytoplasmic vesicle</location>
        <location evidence="1">COPII-coated vesicle membrane</location>
        <topology evidence="1">Peripheral membrane protein</topology>
        <orientation evidence="1">Cytoplasmic side</orientation>
    </subcellularLocation>
    <subcellularLocation>
        <location evidence="1">Endoplasmic reticulum membrane</location>
        <topology evidence="1">Peripheral membrane protein</topology>
        <orientation evidence="1">Cytoplasmic side</orientation>
    </subcellularLocation>
    <subcellularLocation>
        <location evidence="2">Nucleus</location>
        <location evidence="2">Nuclear pore complex</location>
    </subcellularLocation>
</comment>
<comment type="similarity">
    <text evidence="3">Belongs to the WD repeat SEC13 family.</text>
</comment>
<keyword id="KW-0968">Cytoplasmic vesicle</keyword>
<keyword id="KW-0256">Endoplasmic reticulum</keyword>
<keyword id="KW-0931">ER-Golgi transport</keyword>
<keyword id="KW-0472">Membrane</keyword>
<keyword id="KW-0509">mRNA transport</keyword>
<keyword id="KW-0906">Nuclear pore complex</keyword>
<keyword id="KW-0539">Nucleus</keyword>
<keyword id="KW-0653">Protein transport</keyword>
<keyword id="KW-1185">Reference proteome</keyword>
<keyword id="KW-0677">Repeat</keyword>
<keyword id="KW-0811">Translocation</keyword>
<keyword id="KW-0813">Transport</keyword>
<keyword id="KW-0853">WD repeat</keyword>
<name>SEC13_YARLI</name>
<reference key="1">
    <citation type="journal article" date="2004" name="Nature">
        <title>Genome evolution in yeasts.</title>
        <authorList>
            <person name="Dujon B."/>
            <person name="Sherman D."/>
            <person name="Fischer G."/>
            <person name="Durrens P."/>
            <person name="Casaregola S."/>
            <person name="Lafontaine I."/>
            <person name="de Montigny J."/>
            <person name="Marck C."/>
            <person name="Neuveglise C."/>
            <person name="Talla E."/>
            <person name="Goffard N."/>
            <person name="Frangeul L."/>
            <person name="Aigle M."/>
            <person name="Anthouard V."/>
            <person name="Babour A."/>
            <person name="Barbe V."/>
            <person name="Barnay S."/>
            <person name="Blanchin S."/>
            <person name="Beckerich J.-M."/>
            <person name="Beyne E."/>
            <person name="Bleykasten C."/>
            <person name="Boisrame A."/>
            <person name="Boyer J."/>
            <person name="Cattolico L."/>
            <person name="Confanioleri F."/>
            <person name="de Daruvar A."/>
            <person name="Despons L."/>
            <person name="Fabre E."/>
            <person name="Fairhead C."/>
            <person name="Ferry-Dumazet H."/>
            <person name="Groppi A."/>
            <person name="Hantraye F."/>
            <person name="Hennequin C."/>
            <person name="Jauniaux N."/>
            <person name="Joyet P."/>
            <person name="Kachouri R."/>
            <person name="Kerrest A."/>
            <person name="Koszul R."/>
            <person name="Lemaire M."/>
            <person name="Lesur I."/>
            <person name="Ma L."/>
            <person name="Muller H."/>
            <person name="Nicaud J.-M."/>
            <person name="Nikolski M."/>
            <person name="Oztas S."/>
            <person name="Ozier-Kalogeropoulos O."/>
            <person name="Pellenz S."/>
            <person name="Potier S."/>
            <person name="Richard G.-F."/>
            <person name="Straub M.-L."/>
            <person name="Suleau A."/>
            <person name="Swennen D."/>
            <person name="Tekaia F."/>
            <person name="Wesolowski-Louvel M."/>
            <person name="Westhof E."/>
            <person name="Wirth B."/>
            <person name="Zeniou-Meyer M."/>
            <person name="Zivanovic Y."/>
            <person name="Bolotin-Fukuhara M."/>
            <person name="Thierry A."/>
            <person name="Bouchier C."/>
            <person name="Caudron B."/>
            <person name="Scarpelli C."/>
            <person name="Gaillardin C."/>
            <person name="Weissenbach J."/>
            <person name="Wincker P."/>
            <person name="Souciet J.-L."/>
        </authorList>
    </citation>
    <scope>NUCLEOTIDE SEQUENCE [LARGE SCALE GENOMIC DNA]</scope>
    <source>
        <strain>CLIB 122 / E 150</strain>
    </source>
</reference>
<feature type="chain" id="PRO_0000295425" description="Protein transport protein SEC13">
    <location>
        <begin position="1"/>
        <end position="298"/>
    </location>
</feature>
<feature type="repeat" description="WD 1">
    <location>
        <begin position="7"/>
        <end position="46"/>
    </location>
</feature>
<feature type="repeat" description="WD 2">
    <location>
        <begin position="51"/>
        <end position="92"/>
    </location>
</feature>
<feature type="repeat" description="WD 3">
    <location>
        <begin position="96"/>
        <end position="139"/>
    </location>
</feature>
<feature type="repeat" description="WD 4">
    <location>
        <begin position="142"/>
        <end position="197"/>
    </location>
</feature>
<feature type="repeat" description="WD 5">
    <location>
        <begin position="204"/>
        <end position="246"/>
    </location>
</feature>
<feature type="repeat" description="WD 6">
    <location>
        <begin position="253"/>
        <end position="292"/>
    </location>
</feature>
<gene>
    <name type="primary">SEC13</name>
    <name type="ordered locus">YALI0F30151g</name>
</gene>
<organism>
    <name type="scientific">Yarrowia lipolytica (strain CLIB 122 / E 150)</name>
    <name type="common">Yeast</name>
    <name type="synonym">Candida lipolytica</name>
    <dbReference type="NCBI Taxonomy" id="284591"/>
    <lineage>
        <taxon>Eukaryota</taxon>
        <taxon>Fungi</taxon>
        <taxon>Dikarya</taxon>
        <taxon>Ascomycota</taxon>
        <taxon>Saccharomycotina</taxon>
        <taxon>Dipodascomycetes</taxon>
        <taxon>Dipodascales</taxon>
        <taxon>Dipodascales incertae sedis</taxon>
        <taxon>Yarrowia</taxon>
    </lineage>
</organism>
<evidence type="ECO:0000250" key="1"/>
<evidence type="ECO:0000250" key="2">
    <source>
        <dbReference type="UniProtKB" id="Q04491"/>
    </source>
</evidence>
<evidence type="ECO:0000305" key="3"/>